<comment type="catalytic activity">
    <reaction evidence="1">
        <text>tRNA(His) + L-histidine + ATP = L-histidyl-tRNA(His) + AMP + diphosphate + H(+)</text>
        <dbReference type="Rhea" id="RHEA:17313"/>
        <dbReference type="Rhea" id="RHEA-COMP:9665"/>
        <dbReference type="Rhea" id="RHEA-COMP:9689"/>
        <dbReference type="ChEBI" id="CHEBI:15378"/>
        <dbReference type="ChEBI" id="CHEBI:30616"/>
        <dbReference type="ChEBI" id="CHEBI:33019"/>
        <dbReference type="ChEBI" id="CHEBI:57595"/>
        <dbReference type="ChEBI" id="CHEBI:78442"/>
        <dbReference type="ChEBI" id="CHEBI:78527"/>
        <dbReference type="ChEBI" id="CHEBI:456215"/>
        <dbReference type="EC" id="6.1.1.21"/>
    </reaction>
</comment>
<comment type="subunit">
    <text evidence="1">Homodimer.</text>
</comment>
<comment type="subcellular location">
    <subcellularLocation>
        <location evidence="1">Cytoplasm</location>
    </subcellularLocation>
</comment>
<comment type="similarity">
    <text evidence="1">Belongs to the class-II aminoacyl-tRNA synthetase family.</text>
</comment>
<keyword id="KW-0030">Aminoacyl-tRNA synthetase</keyword>
<keyword id="KW-0067">ATP-binding</keyword>
<keyword id="KW-0963">Cytoplasm</keyword>
<keyword id="KW-0436">Ligase</keyword>
<keyword id="KW-0547">Nucleotide-binding</keyword>
<keyword id="KW-0648">Protein biosynthesis</keyword>
<name>SYH_LACDB</name>
<accession>Q04AV4</accession>
<feature type="chain" id="PRO_1000016378" description="Histidine--tRNA ligase">
    <location>
        <begin position="1"/>
        <end position="428"/>
    </location>
</feature>
<reference key="1">
    <citation type="journal article" date="2006" name="Proc. Natl. Acad. Sci. U.S.A.">
        <title>Comparative genomics of the lactic acid bacteria.</title>
        <authorList>
            <person name="Makarova K.S."/>
            <person name="Slesarev A."/>
            <person name="Wolf Y.I."/>
            <person name="Sorokin A."/>
            <person name="Mirkin B."/>
            <person name="Koonin E.V."/>
            <person name="Pavlov A."/>
            <person name="Pavlova N."/>
            <person name="Karamychev V."/>
            <person name="Polouchine N."/>
            <person name="Shakhova V."/>
            <person name="Grigoriev I."/>
            <person name="Lou Y."/>
            <person name="Rohksar D."/>
            <person name="Lucas S."/>
            <person name="Huang K."/>
            <person name="Goodstein D.M."/>
            <person name="Hawkins T."/>
            <person name="Plengvidhya V."/>
            <person name="Welker D."/>
            <person name="Hughes J."/>
            <person name="Goh Y."/>
            <person name="Benson A."/>
            <person name="Baldwin K."/>
            <person name="Lee J.-H."/>
            <person name="Diaz-Muniz I."/>
            <person name="Dosti B."/>
            <person name="Smeianov V."/>
            <person name="Wechter W."/>
            <person name="Barabote R."/>
            <person name="Lorca G."/>
            <person name="Altermann E."/>
            <person name="Barrangou R."/>
            <person name="Ganesan B."/>
            <person name="Xie Y."/>
            <person name="Rawsthorne H."/>
            <person name="Tamir D."/>
            <person name="Parker C."/>
            <person name="Breidt F."/>
            <person name="Broadbent J.R."/>
            <person name="Hutkins R."/>
            <person name="O'Sullivan D."/>
            <person name="Steele J."/>
            <person name="Unlu G."/>
            <person name="Saier M.H. Jr."/>
            <person name="Klaenhammer T."/>
            <person name="Richardson P."/>
            <person name="Kozyavkin S."/>
            <person name="Weimer B.C."/>
            <person name="Mills D.A."/>
        </authorList>
    </citation>
    <scope>NUCLEOTIDE SEQUENCE [LARGE SCALE GENOMIC DNA]</scope>
    <source>
        <strain>ATCC BAA-365 / Lb-18</strain>
    </source>
</reference>
<protein>
    <recommendedName>
        <fullName evidence="1">Histidine--tRNA ligase</fullName>
        <ecNumber evidence="1">6.1.1.21</ecNumber>
    </recommendedName>
    <alternativeName>
        <fullName evidence="1">Histidyl-tRNA synthetase</fullName>
        <shortName evidence="1">HisRS</shortName>
    </alternativeName>
</protein>
<gene>
    <name evidence="1" type="primary">hisS</name>
    <name type="ordered locus">LBUL_0812</name>
</gene>
<proteinExistence type="inferred from homology"/>
<evidence type="ECO:0000255" key="1">
    <source>
        <dbReference type="HAMAP-Rule" id="MF_00127"/>
    </source>
</evidence>
<dbReference type="EC" id="6.1.1.21" evidence="1"/>
<dbReference type="EMBL" id="CP000412">
    <property type="protein sequence ID" value="ABJ58418.1"/>
    <property type="molecule type" value="Genomic_DNA"/>
</dbReference>
<dbReference type="RefSeq" id="WP_003619907.1">
    <property type="nucleotide sequence ID" value="NC_008529.1"/>
</dbReference>
<dbReference type="SMR" id="Q04AV4"/>
<dbReference type="KEGG" id="lbu:LBUL_0812"/>
<dbReference type="HOGENOM" id="CLU_025113_1_1_9"/>
<dbReference type="BioCyc" id="LDEL321956:LBUL_RS03865-MONOMER"/>
<dbReference type="GO" id="GO:0005737">
    <property type="term" value="C:cytoplasm"/>
    <property type="evidence" value="ECO:0007669"/>
    <property type="project" value="UniProtKB-SubCell"/>
</dbReference>
<dbReference type="GO" id="GO:0005524">
    <property type="term" value="F:ATP binding"/>
    <property type="evidence" value="ECO:0007669"/>
    <property type="project" value="UniProtKB-UniRule"/>
</dbReference>
<dbReference type="GO" id="GO:0140096">
    <property type="term" value="F:catalytic activity, acting on a protein"/>
    <property type="evidence" value="ECO:0007669"/>
    <property type="project" value="UniProtKB-ARBA"/>
</dbReference>
<dbReference type="GO" id="GO:0004821">
    <property type="term" value="F:histidine-tRNA ligase activity"/>
    <property type="evidence" value="ECO:0007669"/>
    <property type="project" value="UniProtKB-UniRule"/>
</dbReference>
<dbReference type="GO" id="GO:0016740">
    <property type="term" value="F:transferase activity"/>
    <property type="evidence" value="ECO:0007669"/>
    <property type="project" value="UniProtKB-ARBA"/>
</dbReference>
<dbReference type="GO" id="GO:0006427">
    <property type="term" value="P:histidyl-tRNA aminoacylation"/>
    <property type="evidence" value="ECO:0007669"/>
    <property type="project" value="UniProtKB-UniRule"/>
</dbReference>
<dbReference type="CDD" id="cd00773">
    <property type="entry name" value="HisRS-like_core"/>
    <property type="match status" value="1"/>
</dbReference>
<dbReference type="CDD" id="cd00859">
    <property type="entry name" value="HisRS_anticodon"/>
    <property type="match status" value="1"/>
</dbReference>
<dbReference type="Gene3D" id="3.40.50.800">
    <property type="entry name" value="Anticodon-binding domain"/>
    <property type="match status" value="1"/>
</dbReference>
<dbReference type="Gene3D" id="3.30.930.10">
    <property type="entry name" value="Bira Bifunctional Protein, Domain 2"/>
    <property type="match status" value="1"/>
</dbReference>
<dbReference type="HAMAP" id="MF_00127">
    <property type="entry name" value="His_tRNA_synth"/>
    <property type="match status" value="1"/>
</dbReference>
<dbReference type="InterPro" id="IPR006195">
    <property type="entry name" value="aa-tRNA-synth_II"/>
</dbReference>
<dbReference type="InterPro" id="IPR045864">
    <property type="entry name" value="aa-tRNA-synth_II/BPL/LPL"/>
</dbReference>
<dbReference type="InterPro" id="IPR004154">
    <property type="entry name" value="Anticodon-bd"/>
</dbReference>
<dbReference type="InterPro" id="IPR036621">
    <property type="entry name" value="Anticodon-bd_dom_sf"/>
</dbReference>
<dbReference type="InterPro" id="IPR015807">
    <property type="entry name" value="His-tRNA-ligase"/>
</dbReference>
<dbReference type="InterPro" id="IPR041715">
    <property type="entry name" value="HisRS-like_core"/>
</dbReference>
<dbReference type="InterPro" id="IPR004516">
    <property type="entry name" value="HisRS/HisZ"/>
</dbReference>
<dbReference type="InterPro" id="IPR033656">
    <property type="entry name" value="HisRS_anticodon"/>
</dbReference>
<dbReference type="NCBIfam" id="TIGR00442">
    <property type="entry name" value="hisS"/>
    <property type="match status" value="1"/>
</dbReference>
<dbReference type="PANTHER" id="PTHR43707:SF1">
    <property type="entry name" value="HISTIDINE--TRNA LIGASE, MITOCHONDRIAL-RELATED"/>
    <property type="match status" value="1"/>
</dbReference>
<dbReference type="PANTHER" id="PTHR43707">
    <property type="entry name" value="HISTIDYL-TRNA SYNTHETASE"/>
    <property type="match status" value="1"/>
</dbReference>
<dbReference type="Pfam" id="PF03129">
    <property type="entry name" value="HGTP_anticodon"/>
    <property type="match status" value="1"/>
</dbReference>
<dbReference type="Pfam" id="PF13393">
    <property type="entry name" value="tRNA-synt_His"/>
    <property type="match status" value="1"/>
</dbReference>
<dbReference type="PIRSF" id="PIRSF001549">
    <property type="entry name" value="His-tRNA_synth"/>
    <property type="match status" value="1"/>
</dbReference>
<dbReference type="SUPFAM" id="SSF52954">
    <property type="entry name" value="Class II aaRS ABD-related"/>
    <property type="match status" value="1"/>
</dbReference>
<dbReference type="SUPFAM" id="SSF55681">
    <property type="entry name" value="Class II aaRS and biotin synthetases"/>
    <property type="match status" value="1"/>
</dbReference>
<dbReference type="PROSITE" id="PS50862">
    <property type="entry name" value="AA_TRNA_LIGASE_II"/>
    <property type="match status" value="1"/>
</dbReference>
<organism>
    <name type="scientific">Lactobacillus delbrueckii subsp. bulgaricus (strain ATCC BAA-365 / Lb-18)</name>
    <dbReference type="NCBI Taxonomy" id="321956"/>
    <lineage>
        <taxon>Bacteria</taxon>
        <taxon>Bacillati</taxon>
        <taxon>Bacillota</taxon>
        <taxon>Bacilli</taxon>
        <taxon>Lactobacillales</taxon>
        <taxon>Lactobacillaceae</taxon>
        <taxon>Lactobacillus</taxon>
    </lineage>
</organism>
<sequence>MRVQRPKGTVDILPETSGQWEKVEQTARDLFKRANYHEIRTPSFENYELFSRSSGETSDVVEKEMYDFEDKGGRHIALRPEGTAGVVRAYVENKIYGPDYVKPFNVYYIAAMYRYERPQAGRQREFHQIGVESFGSNGYLADVETILLGHDLLAELGVKNYELHINTLGDSEVRQAYHDALVDYFTPVKDQLSEDSQRRLGKNPLRILDSKAEEDQQFLSEAPKIRDYLDEESKENFNKILASLDKLGVKYVIDDDLVRGLDYYTGVIFEFMVDDPTLWASPSTVLGGGRYNHLVEEFSGPETPAVGFGIGEERLMLVLSKQNPEMFEDQGIDFFITNIGEGTDIKAVEVARQLRSLGFSAQYDVDQKKLKAQFRKADRVGARYVVTLGAKELAEGKLTVKRLSDGQQFSLEFTDLEDKANLLSKIEK</sequence>